<sequence>MSGPPPPVALVRTAVRRALRDLPAGSLVLVACSGGPDSLALAGATAFVAPRLGLRAGGVTVDHGLQEGSAERADTVAALLRNLGFDPVERVSVTVGTAGGPEAAARSARYAALEKTADVHQAAAVLLGHTRDDQAETVLLRLARGSGARSLAAMATRTGRYLRPFLDVDRRTVHEAASLMGFEPWSDPHNTDPAYTRSRVRHEALPVLERVLGPGITEALARTATLLRDDADALDAWADQAQQQVGRGPTALDAAGLAGLPRAIRTRLLRRIALAAGCPAGALTAEHVFALDRLVTEWRGQSHVDLPGARRGRRHDGQIIVSAD</sequence>
<protein>
    <recommendedName>
        <fullName evidence="1">tRNA(Ile)-lysidine synthase</fullName>
        <ecNumber evidence="1">6.3.4.19</ecNumber>
    </recommendedName>
    <alternativeName>
        <fullName evidence="1">tRNA(Ile)-2-lysyl-cytidine synthase</fullName>
    </alternativeName>
    <alternativeName>
        <fullName evidence="1">tRNA(Ile)-lysidine synthetase</fullName>
    </alternativeName>
</protein>
<name>TILS_THEFY</name>
<proteinExistence type="inferred from homology"/>
<dbReference type="EC" id="6.3.4.19" evidence="1"/>
<dbReference type="EMBL" id="CP000088">
    <property type="protein sequence ID" value="AAZ56930.1"/>
    <property type="molecule type" value="Genomic_DNA"/>
</dbReference>
<dbReference type="RefSeq" id="WP_011293320.1">
    <property type="nucleotide sequence ID" value="NC_007333.1"/>
</dbReference>
<dbReference type="SMR" id="Q47KU2"/>
<dbReference type="STRING" id="269800.Tfu_2897"/>
<dbReference type="KEGG" id="tfu:Tfu_2897"/>
<dbReference type="eggNOG" id="COG0037">
    <property type="taxonomic scope" value="Bacteria"/>
</dbReference>
<dbReference type="HOGENOM" id="CLU_018869_1_0_11"/>
<dbReference type="OrthoDB" id="5244702at2"/>
<dbReference type="GO" id="GO:0005737">
    <property type="term" value="C:cytoplasm"/>
    <property type="evidence" value="ECO:0007669"/>
    <property type="project" value="UniProtKB-SubCell"/>
</dbReference>
<dbReference type="GO" id="GO:0005524">
    <property type="term" value="F:ATP binding"/>
    <property type="evidence" value="ECO:0007669"/>
    <property type="project" value="UniProtKB-UniRule"/>
</dbReference>
<dbReference type="GO" id="GO:0032267">
    <property type="term" value="F:tRNA(Ile)-lysidine synthase activity"/>
    <property type="evidence" value="ECO:0007669"/>
    <property type="project" value="UniProtKB-EC"/>
</dbReference>
<dbReference type="GO" id="GO:0006400">
    <property type="term" value="P:tRNA modification"/>
    <property type="evidence" value="ECO:0007669"/>
    <property type="project" value="UniProtKB-UniRule"/>
</dbReference>
<dbReference type="CDD" id="cd01992">
    <property type="entry name" value="TilS_N"/>
    <property type="match status" value="1"/>
</dbReference>
<dbReference type="Gene3D" id="1.20.59.20">
    <property type="match status" value="1"/>
</dbReference>
<dbReference type="Gene3D" id="3.40.50.620">
    <property type="entry name" value="HUPs"/>
    <property type="match status" value="1"/>
</dbReference>
<dbReference type="HAMAP" id="MF_01161">
    <property type="entry name" value="tRNA_Ile_lys_synt"/>
    <property type="match status" value="1"/>
</dbReference>
<dbReference type="InterPro" id="IPR014729">
    <property type="entry name" value="Rossmann-like_a/b/a_fold"/>
</dbReference>
<dbReference type="InterPro" id="IPR011063">
    <property type="entry name" value="TilS/TtcA_N"/>
</dbReference>
<dbReference type="InterPro" id="IPR012094">
    <property type="entry name" value="tRNA_Ile_lys_synt"/>
</dbReference>
<dbReference type="InterPro" id="IPR012795">
    <property type="entry name" value="tRNA_Ile_lys_synt_N"/>
</dbReference>
<dbReference type="InterPro" id="IPR015262">
    <property type="entry name" value="tRNA_Ile_lys_synt_subst-bd"/>
</dbReference>
<dbReference type="NCBIfam" id="TIGR02432">
    <property type="entry name" value="lysidine_TilS_N"/>
    <property type="match status" value="1"/>
</dbReference>
<dbReference type="PANTHER" id="PTHR43033">
    <property type="entry name" value="TRNA(ILE)-LYSIDINE SYNTHASE-RELATED"/>
    <property type="match status" value="1"/>
</dbReference>
<dbReference type="PANTHER" id="PTHR43033:SF1">
    <property type="entry name" value="TRNA(ILE)-LYSIDINE SYNTHASE-RELATED"/>
    <property type="match status" value="1"/>
</dbReference>
<dbReference type="Pfam" id="PF01171">
    <property type="entry name" value="ATP_bind_3"/>
    <property type="match status" value="1"/>
</dbReference>
<dbReference type="Pfam" id="PF09179">
    <property type="entry name" value="TilS"/>
    <property type="match status" value="1"/>
</dbReference>
<dbReference type="SUPFAM" id="SSF52402">
    <property type="entry name" value="Adenine nucleotide alpha hydrolases-like"/>
    <property type="match status" value="1"/>
</dbReference>
<dbReference type="SUPFAM" id="SSF82829">
    <property type="entry name" value="MesJ substrate recognition domain-like"/>
    <property type="match status" value="1"/>
</dbReference>
<keyword id="KW-0067">ATP-binding</keyword>
<keyword id="KW-0963">Cytoplasm</keyword>
<keyword id="KW-0436">Ligase</keyword>
<keyword id="KW-0547">Nucleotide-binding</keyword>
<keyword id="KW-0819">tRNA processing</keyword>
<feature type="chain" id="PRO_1000085373" description="tRNA(Ile)-lysidine synthase">
    <location>
        <begin position="1"/>
        <end position="324"/>
    </location>
</feature>
<feature type="binding site" evidence="1">
    <location>
        <begin position="33"/>
        <end position="38"/>
    </location>
    <ligand>
        <name>ATP</name>
        <dbReference type="ChEBI" id="CHEBI:30616"/>
    </ligand>
</feature>
<evidence type="ECO:0000255" key="1">
    <source>
        <dbReference type="HAMAP-Rule" id="MF_01161"/>
    </source>
</evidence>
<comment type="function">
    <text evidence="1">Ligates lysine onto the cytidine present at position 34 of the AUA codon-specific tRNA(Ile) that contains the anticodon CAU, in an ATP-dependent manner. Cytidine is converted to lysidine, thus changing the amino acid specificity of the tRNA from methionine to isoleucine.</text>
</comment>
<comment type="catalytic activity">
    <reaction evidence="1">
        <text>cytidine(34) in tRNA(Ile2) + L-lysine + ATP = lysidine(34) in tRNA(Ile2) + AMP + diphosphate + H(+)</text>
        <dbReference type="Rhea" id="RHEA:43744"/>
        <dbReference type="Rhea" id="RHEA-COMP:10625"/>
        <dbReference type="Rhea" id="RHEA-COMP:10670"/>
        <dbReference type="ChEBI" id="CHEBI:15378"/>
        <dbReference type="ChEBI" id="CHEBI:30616"/>
        <dbReference type="ChEBI" id="CHEBI:32551"/>
        <dbReference type="ChEBI" id="CHEBI:33019"/>
        <dbReference type="ChEBI" id="CHEBI:82748"/>
        <dbReference type="ChEBI" id="CHEBI:83665"/>
        <dbReference type="ChEBI" id="CHEBI:456215"/>
        <dbReference type="EC" id="6.3.4.19"/>
    </reaction>
</comment>
<comment type="subcellular location">
    <subcellularLocation>
        <location evidence="1">Cytoplasm</location>
    </subcellularLocation>
</comment>
<comment type="domain">
    <text>The N-terminal region contains the highly conserved SGGXDS motif, predicted to be a P-loop motif involved in ATP binding.</text>
</comment>
<comment type="similarity">
    <text evidence="1">Belongs to the tRNA(Ile)-lysidine synthase family.</text>
</comment>
<accession>Q47KU2</accession>
<gene>
    <name evidence="1" type="primary">tilS</name>
    <name type="ordered locus">Tfu_2897</name>
</gene>
<organism>
    <name type="scientific">Thermobifida fusca (strain YX)</name>
    <dbReference type="NCBI Taxonomy" id="269800"/>
    <lineage>
        <taxon>Bacteria</taxon>
        <taxon>Bacillati</taxon>
        <taxon>Actinomycetota</taxon>
        <taxon>Actinomycetes</taxon>
        <taxon>Streptosporangiales</taxon>
        <taxon>Nocardiopsidaceae</taxon>
        <taxon>Thermobifida</taxon>
    </lineage>
</organism>
<reference key="1">
    <citation type="journal article" date="2007" name="J. Bacteriol.">
        <title>Genome sequence and analysis of the soil cellulolytic actinomycete Thermobifida fusca YX.</title>
        <authorList>
            <person name="Lykidis A."/>
            <person name="Mavromatis K."/>
            <person name="Ivanova N."/>
            <person name="Anderson I."/>
            <person name="Land M."/>
            <person name="DiBartolo G."/>
            <person name="Martinez M."/>
            <person name="Lapidus A."/>
            <person name="Lucas S."/>
            <person name="Copeland A."/>
            <person name="Richardson P."/>
            <person name="Wilson D.B."/>
            <person name="Kyrpides N."/>
        </authorList>
    </citation>
    <scope>NUCLEOTIDE SEQUENCE [LARGE SCALE GENOMIC DNA]</scope>
    <source>
        <strain>YX</strain>
    </source>
</reference>